<evidence type="ECO:0000255" key="1">
    <source>
        <dbReference type="HAMAP-Rule" id="MF_00182"/>
    </source>
</evidence>
<protein>
    <recommendedName>
        <fullName evidence="1">Methionyl-tRNA formyltransferase</fullName>
        <ecNumber evidence="1">2.1.2.9</ecNumber>
    </recommendedName>
</protein>
<organism>
    <name type="scientific">Sodalis glossinidius (strain morsitans)</name>
    <dbReference type="NCBI Taxonomy" id="343509"/>
    <lineage>
        <taxon>Bacteria</taxon>
        <taxon>Pseudomonadati</taxon>
        <taxon>Pseudomonadota</taxon>
        <taxon>Gammaproteobacteria</taxon>
        <taxon>Enterobacterales</taxon>
        <taxon>Bruguierivoracaceae</taxon>
        <taxon>Sodalis</taxon>
    </lineage>
</organism>
<comment type="function">
    <text evidence="1">Attaches a formyl group to the free amino group of methionyl-tRNA(fMet). The formyl group appears to play a dual role in the initiator identity of N-formylmethionyl-tRNA by promoting its recognition by IF2 and preventing the misappropriation of this tRNA by the elongation apparatus.</text>
</comment>
<comment type="catalytic activity">
    <reaction evidence="1">
        <text>L-methionyl-tRNA(fMet) + (6R)-10-formyltetrahydrofolate = N-formyl-L-methionyl-tRNA(fMet) + (6S)-5,6,7,8-tetrahydrofolate + H(+)</text>
        <dbReference type="Rhea" id="RHEA:24380"/>
        <dbReference type="Rhea" id="RHEA-COMP:9952"/>
        <dbReference type="Rhea" id="RHEA-COMP:9953"/>
        <dbReference type="ChEBI" id="CHEBI:15378"/>
        <dbReference type="ChEBI" id="CHEBI:57453"/>
        <dbReference type="ChEBI" id="CHEBI:78530"/>
        <dbReference type="ChEBI" id="CHEBI:78844"/>
        <dbReference type="ChEBI" id="CHEBI:195366"/>
        <dbReference type="EC" id="2.1.2.9"/>
    </reaction>
</comment>
<comment type="similarity">
    <text evidence="1">Belongs to the Fmt family.</text>
</comment>
<proteinExistence type="inferred from homology"/>
<name>FMT_SODGM</name>
<gene>
    <name evidence="1" type="primary">fmt</name>
    <name type="ordered locus">SG2247</name>
</gene>
<accession>Q2NQQ3</accession>
<dbReference type="EC" id="2.1.2.9" evidence="1"/>
<dbReference type="EMBL" id="AP008232">
    <property type="protein sequence ID" value="BAE75522.1"/>
    <property type="molecule type" value="Genomic_DNA"/>
</dbReference>
<dbReference type="RefSeq" id="WP_011412058.1">
    <property type="nucleotide sequence ID" value="NC_007712.1"/>
</dbReference>
<dbReference type="SMR" id="Q2NQQ3"/>
<dbReference type="STRING" id="343509.SG2247"/>
<dbReference type="KEGG" id="sgl:SG2247"/>
<dbReference type="eggNOG" id="COG0223">
    <property type="taxonomic scope" value="Bacteria"/>
</dbReference>
<dbReference type="HOGENOM" id="CLU_033347_1_2_6"/>
<dbReference type="OrthoDB" id="9802815at2"/>
<dbReference type="BioCyc" id="SGLO343509:SGP1_RS20680-MONOMER"/>
<dbReference type="Proteomes" id="UP000001932">
    <property type="component" value="Chromosome"/>
</dbReference>
<dbReference type="GO" id="GO:0005829">
    <property type="term" value="C:cytosol"/>
    <property type="evidence" value="ECO:0007669"/>
    <property type="project" value="TreeGrafter"/>
</dbReference>
<dbReference type="GO" id="GO:0004479">
    <property type="term" value="F:methionyl-tRNA formyltransferase activity"/>
    <property type="evidence" value="ECO:0007669"/>
    <property type="project" value="UniProtKB-UniRule"/>
</dbReference>
<dbReference type="CDD" id="cd08646">
    <property type="entry name" value="FMT_core_Met-tRNA-FMT_N"/>
    <property type="match status" value="1"/>
</dbReference>
<dbReference type="CDD" id="cd08704">
    <property type="entry name" value="Met_tRNA_FMT_C"/>
    <property type="match status" value="1"/>
</dbReference>
<dbReference type="FunFam" id="3.40.50.12230:FF:000001">
    <property type="entry name" value="Methionyl-tRNA formyltransferase"/>
    <property type="match status" value="1"/>
</dbReference>
<dbReference type="FunFam" id="3.40.50.170:FF:000003">
    <property type="entry name" value="Methionyl-tRNA formyltransferase"/>
    <property type="match status" value="1"/>
</dbReference>
<dbReference type="Gene3D" id="3.10.25.10">
    <property type="entry name" value="Formyl transferase, C-terminal domain"/>
    <property type="match status" value="1"/>
</dbReference>
<dbReference type="Gene3D" id="3.40.50.170">
    <property type="entry name" value="Formyl transferase, N-terminal domain"/>
    <property type="match status" value="1"/>
</dbReference>
<dbReference type="HAMAP" id="MF_00182">
    <property type="entry name" value="Formyl_trans"/>
    <property type="match status" value="1"/>
</dbReference>
<dbReference type="InterPro" id="IPR005794">
    <property type="entry name" value="Fmt"/>
</dbReference>
<dbReference type="InterPro" id="IPR005793">
    <property type="entry name" value="Formyl_trans_C"/>
</dbReference>
<dbReference type="InterPro" id="IPR037022">
    <property type="entry name" value="Formyl_trans_C_sf"/>
</dbReference>
<dbReference type="InterPro" id="IPR002376">
    <property type="entry name" value="Formyl_transf_N"/>
</dbReference>
<dbReference type="InterPro" id="IPR036477">
    <property type="entry name" value="Formyl_transf_N_sf"/>
</dbReference>
<dbReference type="InterPro" id="IPR011034">
    <property type="entry name" value="Formyl_transferase-like_C_sf"/>
</dbReference>
<dbReference type="InterPro" id="IPR001555">
    <property type="entry name" value="GART_AS"/>
</dbReference>
<dbReference type="InterPro" id="IPR044135">
    <property type="entry name" value="Met-tRNA-FMT_C"/>
</dbReference>
<dbReference type="InterPro" id="IPR041711">
    <property type="entry name" value="Met-tRNA-FMT_N"/>
</dbReference>
<dbReference type="NCBIfam" id="TIGR00460">
    <property type="entry name" value="fmt"/>
    <property type="match status" value="1"/>
</dbReference>
<dbReference type="PANTHER" id="PTHR11138">
    <property type="entry name" value="METHIONYL-TRNA FORMYLTRANSFERASE"/>
    <property type="match status" value="1"/>
</dbReference>
<dbReference type="PANTHER" id="PTHR11138:SF5">
    <property type="entry name" value="METHIONYL-TRNA FORMYLTRANSFERASE, MITOCHONDRIAL"/>
    <property type="match status" value="1"/>
</dbReference>
<dbReference type="Pfam" id="PF02911">
    <property type="entry name" value="Formyl_trans_C"/>
    <property type="match status" value="1"/>
</dbReference>
<dbReference type="Pfam" id="PF00551">
    <property type="entry name" value="Formyl_trans_N"/>
    <property type="match status" value="1"/>
</dbReference>
<dbReference type="SUPFAM" id="SSF50486">
    <property type="entry name" value="FMT C-terminal domain-like"/>
    <property type="match status" value="1"/>
</dbReference>
<dbReference type="SUPFAM" id="SSF53328">
    <property type="entry name" value="Formyltransferase"/>
    <property type="match status" value="1"/>
</dbReference>
<dbReference type="PROSITE" id="PS00373">
    <property type="entry name" value="GART"/>
    <property type="match status" value="1"/>
</dbReference>
<reference key="1">
    <citation type="journal article" date="2006" name="Genome Res.">
        <title>Massive genome erosion and functional adaptations provide insights into the symbiotic lifestyle of Sodalis glossinidius in the tsetse host.</title>
        <authorList>
            <person name="Toh H."/>
            <person name="Weiss B.L."/>
            <person name="Perkin S.A.H."/>
            <person name="Yamashita A."/>
            <person name="Oshima K."/>
            <person name="Hattori M."/>
            <person name="Aksoy S."/>
        </authorList>
    </citation>
    <scope>NUCLEOTIDE SEQUENCE [LARGE SCALE GENOMIC DNA]</scope>
    <source>
        <strain>morsitans</strain>
    </source>
</reference>
<feature type="chain" id="PRO_1000020168" description="Methionyl-tRNA formyltransferase">
    <location>
        <begin position="1"/>
        <end position="316"/>
    </location>
</feature>
<feature type="binding site" evidence="1">
    <location>
        <begin position="113"/>
        <end position="116"/>
    </location>
    <ligand>
        <name>(6S)-5,6,7,8-tetrahydrofolate</name>
        <dbReference type="ChEBI" id="CHEBI:57453"/>
    </ligand>
</feature>
<sequence>MSDSLRIIFAGTPDFAARHLDALIDAKQQVVGVFTQPDRPAGRGNRLTPSPVKELAERHDLPVFQPASLRKPEGQRSVAELNADIMVVVAYGLILPQAVLDLPLLGCINVHGSLLPRWRGAAPIQRALWAGDDRTGVTIMQMDAGLDTGAMLHKAVCAIQHDDTSASLYDKLAQIGPNALLSTLTQIAAGRAVAESQDNALATYADKLSKEEARLDWRLPAAQLERCIRAFNPWPISYFSLAEQPIKVWAAGVDDGQTSSHAPGTILAADKAGIHIATGAGVLTLTQLQPAGKKAMSVQDLLNSRRESFIPGTVLD</sequence>
<keyword id="KW-0648">Protein biosynthesis</keyword>
<keyword id="KW-0808">Transferase</keyword>